<protein>
    <recommendedName>
        <fullName>Kunitz-type U15-theraphotoxin-Hhn1h</fullName>
        <shortName>U15-TRTX-Hhn1h</shortName>
    </recommendedName>
    <alternativeName>
        <fullName evidence="5">Kunitz-type serine protease inhibitor HNTX-03141007</fullName>
    </alternativeName>
</protein>
<organism>
    <name type="scientific">Cyriopagopus hainanus</name>
    <name type="common">Chinese bird spider</name>
    <name type="synonym">Haplopelma hainanum</name>
    <dbReference type="NCBI Taxonomy" id="209901"/>
    <lineage>
        <taxon>Eukaryota</taxon>
        <taxon>Metazoa</taxon>
        <taxon>Ecdysozoa</taxon>
        <taxon>Arthropoda</taxon>
        <taxon>Chelicerata</taxon>
        <taxon>Arachnida</taxon>
        <taxon>Araneae</taxon>
        <taxon>Mygalomorphae</taxon>
        <taxon>Theraphosidae</taxon>
        <taxon>Haplopelma</taxon>
    </lineage>
</organism>
<name>VKT7_CYRHA</name>
<keyword id="KW-1015">Disulfide bond</keyword>
<keyword id="KW-0646">Protease inhibitor</keyword>
<keyword id="KW-0964">Secreted</keyword>
<keyword id="KW-0722">Serine protease inhibitor</keyword>
<keyword id="KW-0732">Signal</keyword>
<proteinExistence type="inferred from homology"/>
<dbReference type="SMR" id="P0DJ65"/>
<dbReference type="ArachnoServer" id="AS001979">
    <property type="toxin name" value="U15-theraphotoxin-Hhn1h"/>
</dbReference>
<dbReference type="GO" id="GO:0005576">
    <property type="term" value="C:extracellular region"/>
    <property type="evidence" value="ECO:0007669"/>
    <property type="project" value="UniProtKB-SubCell"/>
</dbReference>
<dbReference type="GO" id="GO:0015459">
    <property type="term" value="F:potassium channel regulator activity"/>
    <property type="evidence" value="ECO:0007669"/>
    <property type="project" value="UniProtKB-KW"/>
</dbReference>
<dbReference type="GO" id="GO:0004867">
    <property type="term" value="F:serine-type endopeptidase inhibitor activity"/>
    <property type="evidence" value="ECO:0007669"/>
    <property type="project" value="UniProtKB-KW"/>
</dbReference>
<dbReference type="GO" id="GO:0090729">
    <property type="term" value="F:toxin activity"/>
    <property type="evidence" value="ECO:0007669"/>
    <property type="project" value="UniProtKB-KW"/>
</dbReference>
<dbReference type="GO" id="GO:0044562">
    <property type="term" value="P:envenomation resulting in negative regulation of voltage-gated potassium channel activity in another organism"/>
    <property type="evidence" value="ECO:0007669"/>
    <property type="project" value="UniProtKB-ARBA"/>
</dbReference>
<dbReference type="CDD" id="cd22598">
    <property type="entry name" value="Kunitz_huwentoxin"/>
    <property type="match status" value="1"/>
</dbReference>
<dbReference type="FunFam" id="4.10.410.10:FF:000020">
    <property type="entry name" value="Collagen, type VI, alpha 3"/>
    <property type="match status" value="1"/>
</dbReference>
<dbReference type="Gene3D" id="4.10.410.10">
    <property type="entry name" value="Pancreatic trypsin inhibitor Kunitz domain"/>
    <property type="match status" value="1"/>
</dbReference>
<dbReference type="InterPro" id="IPR002223">
    <property type="entry name" value="Kunitz_BPTI"/>
</dbReference>
<dbReference type="InterPro" id="IPR036880">
    <property type="entry name" value="Kunitz_BPTI_sf"/>
</dbReference>
<dbReference type="InterPro" id="IPR051388">
    <property type="entry name" value="Serpin_venom_toxin"/>
</dbReference>
<dbReference type="PANTHER" id="PTHR46751">
    <property type="entry name" value="EPPIN"/>
    <property type="match status" value="1"/>
</dbReference>
<dbReference type="PANTHER" id="PTHR46751:SF1">
    <property type="entry name" value="WAP FOUR-DISULFIDE CORE DOMAIN PROTEIN 6A"/>
    <property type="match status" value="1"/>
</dbReference>
<dbReference type="Pfam" id="PF00014">
    <property type="entry name" value="Kunitz_BPTI"/>
    <property type="match status" value="1"/>
</dbReference>
<dbReference type="PRINTS" id="PR00759">
    <property type="entry name" value="BASICPTASE"/>
</dbReference>
<dbReference type="SMART" id="SM00131">
    <property type="entry name" value="KU"/>
    <property type="match status" value="1"/>
</dbReference>
<dbReference type="SUPFAM" id="SSF57362">
    <property type="entry name" value="BPTI-like"/>
    <property type="match status" value="1"/>
</dbReference>
<dbReference type="PROSITE" id="PS50279">
    <property type="entry name" value="BPTI_KUNITZ_2"/>
    <property type="match status" value="1"/>
</dbReference>
<reference key="1">
    <citation type="journal article" date="2008" name="PLoS ONE">
        <title>Discovery of a distinct superfamily of Kunitz-type toxin (KTT) from tarantulas.</title>
        <authorList>
            <person name="Yuan C.-H."/>
            <person name="He Q.-Y."/>
            <person name="Peng K."/>
            <person name="Diao J.-B."/>
            <person name="Jiang L.-P."/>
            <person name="Tang X."/>
            <person name="Liang S.-P."/>
        </authorList>
    </citation>
    <scope>NUCLEOTIDE SEQUENCE [MRNA]</scope>
    <source>
        <tissue>Venom gland</tissue>
    </source>
</reference>
<evidence type="ECO:0000250" key="1"/>
<evidence type="ECO:0000250" key="2">
    <source>
        <dbReference type="UniProtKB" id="P68425"/>
    </source>
</evidence>
<evidence type="ECO:0000255" key="3"/>
<evidence type="ECO:0000255" key="4">
    <source>
        <dbReference type="PROSITE-ProRule" id="PRU00031"/>
    </source>
</evidence>
<evidence type="ECO:0000303" key="5">
    <source>
    </source>
</evidence>
<evidence type="ECO:0000305" key="6"/>
<evidence type="ECO:0000305" key="7">
    <source>
    </source>
</evidence>
<sequence length="88" mass="9833">MGTARFLRAVLLLSVLLMVTFPALLSAEHHDGRVDICRLPSGSGDCLRFFEMWYFDGTTCTKFVYGGYGGNDNRFPTEKACMKRCAKA</sequence>
<accession>P0DJ65</accession>
<comment type="function">
    <text evidence="2">Serine protease inhibitor that inhibits trypsin at a molar ratio of 1:1.</text>
</comment>
<comment type="subcellular location">
    <subcellularLocation>
        <location evidence="7">Secreted</location>
    </subcellularLocation>
</comment>
<comment type="tissue specificity">
    <text evidence="7">Expressed by the venom gland.</text>
</comment>
<comment type="similarity">
    <text evidence="6">Belongs to the venom Kunitz-type family. 03 (sub-Kunitz) subfamily.</text>
</comment>
<feature type="signal peptide" evidence="3">
    <location>
        <begin position="1"/>
        <end position="27"/>
    </location>
</feature>
<feature type="propeptide" id="PRO_0000413807" evidence="1">
    <location>
        <begin position="28"/>
        <end position="33"/>
    </location>
</feature>
<feature type="chain" id="PRO_0000413808" description="Kunitz-type U15-theraphotoxin-Hhn1h">
    <location>
        <begin position="34"/>
        <end position="88"/>
    </location>
</feature>
<feature type="domain" description="BPTI/Kunitz inhibitor" evidence="4">
    <location>
        <begin position="37"/>
        <end position="85"/>
    </location>
</feature>
<feature type="site" description="May bind Kv1" evidence="1">
    <location>
        <position position="39"/>
    </location>
</feature>
<feature type="site" description="Reactive bond for chymotrypsin" evidence="1">
    <location>
        <begin position="47"/>
        <end position="48"/>
    </location>
</feature>
<feature type="disulfide bond" evidence="4">
    <location>
        <begin position="37"/>
        <end position="85"/>
    </location>
</feature>
<feature type="disulfide bond" evidence="4">
    <location>
        <begin position="60"/>
        <end position="81"/>
    </location>
</feature>